<name>COFD_METLZ</name>
<sequence>MITVFSGGTGTPKLIRGLRQILHDHEITVVVNTAEDLWMSGLYVSPDIDTVQYLFSGLLNTDSWWGIRGDSFETFHAMEKLGYTELLPLGDKDRATNIARAEFLRQGMTLTEATEKIAKGYGVSARILPMSDQNVASYVVCEDDSLMHYQEYWVGKRGNVNIKGVVRKTTDGLPLKTTPEVISAIEESDGVIIGPSNPVTSIGPILECAGVREALQNTFTAAVSPFIGNRPVSGPAAALMKAWGYESTSYGTWQVYKDVVDLFIQDVRDTAIEVPGAHRLDTMMTNEKKAESLAWDLLSYFPRK</sequence>
<reference key="1">
    <citation type="journal article" date="2009" name="Stand. Genomic Sci.">
        <title>Complete genome sequence of Methanocorpusculum labreanum type strain Z.</title>
        <authorList>
            <person name="Anderson I.J."/>
            <person name="Sieprawska-Lupa M."/>
            <person name="Goltsman E."/>
            <person name="Lapidus A."/>
            <person name="Copeland A."/>
            <person name="Glavina Del Rio T."/>
            <person name="Tice H."/>
            <person name="Dalin E."/>
            <person name="Barry K."/>
            <person name="Pitluck S."/>
            <person name="Hauser L."/>
            <person name="Land M."/>
            <person name="Lucas S."/>
            <person name="Richardson P."/>
            <person name="Whitman W.B."/>
            <person name="Kyrpides N.C."/>
        </authorList>
    </citation>
    <scope>NUCLEOTIDE SEQUENCE [LARGE SCALE GENOMIC DNA]</scope>
    <source>
        <strain>ATCC 43576 / DSM 4855 / Z</strain>
    </source>
</reference>
<keyword id="KW-0460">Magnesium</keyword>
<keyword id="KW-1185">Reference proteome</keyword>
<keyword id="KW-0808">Transferase</keyword>
<evidence type="ECO:0000255" key="1">
    <source>
        <dbReference type="HAMAP-Rule" id="MF_01257"/>
    </source>
</evidence>
<comment type="function">
    <text evidence="1">Catalyzes the transfer of the 2-phospholactate moiety from (2S)-lactyl-2-diphospho-5'-guanosine to 7,8-didemethyl-8-hydroxy-5-deazariboflavin (FO) with the formation of oxidized coenzyme F420-0 and GMP.</text>
</comment>
<comment type="catalytic activity">
    <reaction evidence="1">
        <text>(2S)-lactyl-2-diphospho-5'-guanosine + 7,8-didemethyl-8-hydroxy-5-deazariboflavin = oxidized coenzyme F420-0 + GMP + H(+)</text>
        <dbReference type="Rhea" id="RHEA:63444"/>
        <dbReference type="ChEBI" id="CHEBI:15378"/>
        <dbReference type="ChEBI" id="CHEBI:58115"/>
        <dbReference type="ChEBI" id="CHEBI:59435"/>
        <dbReference type="ChEBI" id="CHEBI:59904"/>
        <dbReference type="ChEBI" id="CHEBI:59907"/>
        <dbReference type="EC" id="2.7.8.28"/>
    </reaction>
</comment>
<comment type="cofactor">
    <cofactor evidence="1">
        <name>Mg(2+)</name>
        <dbReference type="ChEBI" id="CHEBI:18420"/>
    </cofactor>
</comment>
<comment type="pathway">
    <text evidence="1">Cofactor biosynthesis; coenzyme F420 biosynthesis.</text>
</comment>
<comment type="subunit">
    <text evidence="1">Homodimer.</text>
</comment>
<comment type="similarity">
    <text evidence="1">Belongs to the CofD family.</text>
</comment>
<organism>
    <name type="scientific">Methanocorpusculum labreanum (strain ATCC 43576 / DSM 4855 / Z)</name>
    <dbReference type="NCBI Taxonomy" id="410358"/>
    <lineage>
        <taxon>Archaea</taxon>
        <taxon>Methanobacteriati</taxon>
        <taxon>Methanobacteriota</taxon>
        <taxon>Stenosarchaea group</taxon>
        <taxon>Methanomicrobia</taxon>
        <taxon>Methanomicrobiales</taxon>
        <taxon>Methanocorpusculaceae</taxon>
        <taxon>Methanocorpusculum</taxon>
    </lineage>
</organism>
<dbReference type="EC" id="2.7.8.28" evidence="1"/>
<dbReference type="EMBL" id="CP000559">
    <property type="protein sequence ID" value="ABN06329.1"/>
    <property type="molecule type" value="Genomic_DNA"/>
</dbReference>
<dbReference type="RefSeq" id="WP_011832530.1">
    <property type="nucleotide sequence ID" value="NC_008942.1"/>
</dbReference>
<dbReference type="SMR" id="A2SPS3"/>
<dbReference type="STRING" id="410358.Mlab_0152"/>
<dbReference type="GeneID" id="4795986"/>
<dbReference type="KEGG" id="mla:Mlab_0152"/>
<dbReference type="eggNOG" id="arCOG04395">
    <property type="taxonomic scope" value="Archaea"/>
</dbReference>
<dbReference type="HOGENOM" id="CLU_055795_1_0_2"/>
<dbReference type="OrthoDB" id="59563at2157"/>
<dbReference type="UniPathway" id="UPA00071"/>
<dbReference type="Proteomes" id="UP000000365">
    <property type="component" value="Chromosome"/>
</dbReference>
<dbReference type="GO" id="GO:0043743">
    <property type="term" value="F:LPPG:FO 2-phospho-L-lactate transferase activity"/>
    <property type="evidence" value="ECO:0007669"/>
    <property type="project" value="UniProtKB-EC"/>
</dbReference>
<dbReference type="GO" id="GO:0000287">
    <property type="term" value="F:magnesium ion binding"/>
    <property type="evidence" value="ECO:0007669"/>
    <property type="project" value="InterPro"/>
</dbReference>
<dbReference type="GO" id="GO:0052645">
    <property type="term" value="P:F420-0 metabolic process"/>
    <property type="evidence" value="ECO:0007669"/>
    <property type="project" value="UniProtKB-UniRule"/>
</dbReference>
<dbReference type="CDD" id="cd07186">
    <property type="entry name" value="CofD_like"/>
    <property type="match status" value="1"/>
</dbReference>
<dbReference type="Gene3D" id="1.10.8.240">
    <property type="entry name" value="CofD-like domain"/>
    <property type="match status" value="1"/>
</dbReference>
<dbReference type="Gene3D" id="3.40.50.10680">
    <property type="entry name" value="CofD-like domains"/>
    <property type="match status" value="1"/>
</dbReference>
<dbReference type="HAMAP" id="MF_01257">
    <property type="entry name" value="CofD"/>
    <property type="match status" value="1"/>
</dbReference>
<dbReference type="InterPro" id="IPR002882">
    <property type="entry name" value="CofD"/>
</dbReference>
<dbReference type="InterPro" id="IPR038136">
    <property type="entry name" value="CofD-like_dom_sf"/>
</dbReference>
<dbReference type="InterPro" id="IPR010115">
    <property type="entry name" value="FbiA/CofD"/>
</dbReference>
<dbReference type="NCBIfam" id="TIGR01819">
    <property type="entry name" value="F420_cofD"/>
    <property type="match status" value="1"/>
</dbReference>
<dbReference type="PANTHER" id="PTHR43007">
    <property type="entry name" value="2-PHOSPHO-L-LACTATE TRANSFERASE"/>
    <property type="match status" value="1"/>
</dbReference>
<dbReference type="PANTHER" id="PTHR43007:SF1">
    <property type="entry name" value="2-PHOSPHO-L-LACTATE TRANSFERASE"/>
    <property type="match status" value="1"/>
</dbReference>
<dbReference type="Pfam" id="PF01933">
    <property type="entry name" value="CofD"/>
    <property type="match status" value="1"/>
</dbReference>
<dbReference type="SUPFAM" id="SSF142338">
    <property type="entry name" value="CofD-like"/>
    <property type="match status" value="1"/>
</dbReference>
<accession>A2SPS3</accession>
<protein>
    <recommendedName>
        <fullName evidence="1">2-phospho-L-lactate transferase</fullName>
        <ecNumber evidence="1">2.7.8.28</ecNumber>
    </recommendedName>
</protein>
<feature type="chain" id="PRO_1000165109" description="2-phospho-L-lactate transferase">
    <location>
        <begin position="1"/>
        <end position="304"/>
    </location>
</feature>
<feature type="binding site" evidence="1">
    <location>
        <position position="49"/>
    </location>
    <ligand>
        <name>7,8-didemethyl-8-hydroxy-5-deazariboflavin</name>
        <dbReference type="ChEBI" id="CHEBI:59904"/>
    </ligand>
</feature>
<proteinExistence type="inferred from homology"/>
<gene>
    <name evidence="1" type="primary">cofD</name>
    <name type="ordered locus">Mlab_0152</name>
</gene>